<keyword id="KW-0143">Chaperone</keyword>
<keyword id="KW-0963">Cytoplasm</keyword>
<keyword id="KW-1015">Disulfide bond</keyword>
<keyword id="KW-0676">Redox-active center</keyword>
<keyword id="KW-0862">Zinc</keyword>
<organism>
    <name type="scientific">Clostridium botulinum (strain Okra / Type B1)</name>
    <dbReference type="NCBI Taxonomy" id="498213"/>
    <lineage>
        <taxon>Bacteria</taxon>
        <taxon>Bacillati</taxon>
        <taxon>Bacillota</taxon>
        <taxon>Clostridia</taxon>
        <taxon>Eubacteriales</taxon>
        <taxon>Clostridiaceae</taxon>
        <taxon>Clostridium</taxon>
    </lineage>
</organism>
<reference key="1">
    <citation type="journal article" date="2007" name="PLoS ONE">
        <title>Analysis of the neurotoxin complex genes in Clostridium botulinum A1-A4 and B1 strains: BoNT/A3, /Ba4 and /B1 clusters are located within plasmids.</title>
        <authorList>
            <person name="Smith T.J."/>
            <person name="Hill K.K."/>
            <person name="Foley B.T."/>
            <person name="Detter J.C."/>
            <person name="Munk A.C."/>
            <person name="Bruce D.C."/>
            <person name="Doggett N.A."/>
            <person name="Smith L.A."/>
            <person name="Marks J.D."/>
            <person name="Xie G."/>
            <person name="Brettin T.S."/>
        </authorList>
    </citation>
    <scope>NUCLEOTIDE SEQUENCE [LARGE SCALE GENOMIC DNA]</scope>
    <source>
        <strain>Okra / Type B1</strain>
    </source>
</reference>
<name>HSLO_CLOBK</name>
<comment type="function">
    <text evidence="1">Redox regulated molecular chaperone. Protects both thermally unfolding and oxidatively damaged proteins from irreversible aggregation. Plays an important role in the bacterial defense system toward oxidative stress.</text>
</comment>
<comment type="subcellular location">
    <subcellularLocation>
        <location evidence="1">Cytoplasm</location>
    </subcellularLocation>
</comment>
<comment type="PTM">
    <text evidence="1">Under oxidizing conditions two disulfide bonds are formed involving the reactive cysteines. Under reducing conditions zinc is bound to the reactive cysteines and the protein is inactive.</text>
</comment>
<comment type="similarity">
    <text evidence="1">Belongs to the HSP33 family.</text>
</comment>
<feature type="chain" id="PRO_1000095014" description="33 kDa chaperonin">
    <location>
        <begin position="1"/>
        <end position="296"/>
    </location>
</feature>
<feature type="disulfide bond" description="Redox-active" evidence="1">
    <location>
        <begin position="238"/>
        <end position="240"/>
    </location>
</feature>
<feature type="disulfide bond" description="Redox-active" evidence="1">
    <location>
        <begin position="271"/>
        <end position="274"/>
    </location>
</feature>
<accession>B1IMV8</accession>
<gene>
    <name evidence="1" type="primary">hslO</name>
    <name type="ordered locus">CLD_1393</name>
</gene>
<sequence length="296" mass="32238">MKDKLVKAIAKDGQVRIIGAITTELVNEGVKLHNCAPTAAAALGRMLTAGALMGTTLKSEKDTLTLQIHGGGIAKGVVVTSYADGHVKGYIGNPTADIEPNSKGKLDVSGIIGKNGNLLVIRDMGLKEPYIGQVPIYTGEIGEDLAYYYTVSEQTPSAVGLGVLVDKDLSIKSAGGFIIQMMPGADEMLADLISYRLEEIPSITEMISKGMTIEEILEYIFEDMDLKILESIAPEYRCDCSREKVERALASIGQKDLKEIYDEGKEEELKCHFCNKAYVFSHDEVGDILENYYSEK</sequence>
<protein>
    <recommendedName>
        <fullName evidence="1">33 kDa chaperonin</fullName>
    </recommendedName>
    <alternativeName>
        <fullName evidence="1">Heat shock protein 33 homolog</fullName>
        <shortName evidence="1">HSP33</shortName>
    </alternativeName>
</protein>
<proteinExistence type="inferred from homology"/>
<evidence type="ECO:0000255" key="1">
    <source>
        <dbReference type="HAMAP-Rule" id="MF_00117"/>
    </source>
</evidence>
<dbReference type="EMBL" id="CP000939">
    <property type="protein sequence ID" value="ACA44022.1"/>
    <property type="molecule type" value="Genomic_DNA"/>
</dbReference>
<dbReference type="RefSeq" id="WP_003405920.1">
    <property type="nucleotide sequence ID" value="NC_010516.1"/>
</dbReference>
<dbReference type="SMR" id="B1IMV8"/>
<dbReference type="KEGG" id="cbb:CLD_1393"/>
<dbReference type="HOGENOM" id="CLU_054493_1_0_9"/>
<dbReference type="Proteomes" id="UP000008541">
    <property type="component" value="Chromosome"/>
</dbReference>
<dbReference type="GO" id="GO:0005737">
    <property type="term" value="C:cytoplasm"/>
    <property type="evidence" value="ECO:0007669"/>
    <property type="project" value="UniProtKB-SubCell"/>
</dbReference>
<dbReference type="GO" id="GO:0044183">
    <property type="term" value="F:protein folding chaperone"/>
    <property type="evidence" value="ECO:0007669"/>
    <property type="project" value="TreeGrafter"/>
</dbReference>
<dbReference type="GO" id="GO:0051082">
    <property type="term" value="F:unfolded protein binding"/>
    <property type="evidence" value="ECO:0007669"/>
    <property type="project" value="UniProtKB-UniRule"/>
</dbReference>
<dbReference type="GO" id="GO:0042026">
    <property type="term" value="P:protein refolding"/>
    <property type="evidence" value="ECO:0007669"/>
    <property type="project" value="TreeGrafter"/>
</dbReference>
<dbReference type="CDD" id="cd00498">
    <property type="entry name" value="Hsp33"/>
    <property type="match status" value="1"/>
</dbReference>
<dbReference type="Gene3D" id="3.55.30.10">
    <property type="entry name" value="Hsp33 domain"/>
    <property type="match status" value="1"/>
</dbReference>
<dbReference type="Gene3D" id="3.90.1280.10">
    <property type="entry name" value="HSP33 redox switch-like"/>
    <property type="match status" value="1"/>
</dbReference>
<dbReference type="HAMAP" id="MF_00117">
    <property type="entry name" value="HslO"/>
    <property type="match status" value="1"/>
</dbReference>
<dbReference type="InterPro" id="IPR000397">
    <property type="entry name" value="Heat_shock_Hsp33"/>
</dbReference>
<dbReference type="InterPro" id="IPR016154">
    <property type="entry name" value="Heat_shock_Hsp33_C"/>
</dbReference>
<dbReference type="InterPro" id="IPR016153">
    <property type="entry name" value="Heat_shock_Hsp33_N"/>
</dbReference>
<dbReference type="NCBIfam" id="NF001033">
    <property type="entry name" value="PRK00114.1"/>
    <property type="match status" value="1"/>
</dbReference>
<dbReference type="PANTHER" id="PTHR30111">
    <property type="entry name" value="33 KDA CHAPERONIN"/>
    <property type="match status" value="1"/>
</dbReference>
<dbReference type="PANTHER" id="PTHR30111:SF1">
    <property type="entry name" value="33 KDA CHAPERONIN"/>
    <property type="match status" value="1"/>
</dbReference>
<dbReference type="Pfam" id="PF01430">
    <property type="entry name" value="HSP33"/>
    <property type="match status" value="1"/>
</dbReference>
<dbReference type="PIRSF" id="PIRSF005261">
    <property type="entry name" value="Heat_shock_Hsp33"/>
    <property type="match status" value="1"/>
</dbReference>
<dbReference type="SUPFAM" id="SSF64397">
    <property type="entry name" value="Hsp33 domain"/>
    <property type="match status" value="1"/>
</dbReference>
<dbReference type="SUPFAM" id="SSF118352">
    <property type="entry name" value="HSP33 redox switch-like"/>
    <property type="match status" value="1"/>
</dbReference>